<evidence type="ECO:0000250" key="1">
    <source>
        <dbReference type="UniProtKB" id="P9WKC9"/>
    </source>
</evidence>
<evidence type="ECO:0000255" key="2"/>
<evidence type="ECO:0000305" key="3"/>
<keyword id="KW-0012">Acyltransferase</keyword>
<keyword id="KW-0319">Glycerol metabolism</keyword>
<keyword id="KW-0444">Lipid biosynthesis</keyword>
<keyword id="KW-0443">Lipid metabolism</keyword>
<keyword id="KW-1185">Reference proteome</keyword>
<keyword id="KW-0808">Transferase</keyword>
<proteinExistence type="inferred from homology"/>
<comment type="catalytic activity">
    <reaction evidence="1">
        <text>an acyl-CoA + a 1,2-diacyl-sn-glycerol = a triacyl-sn-glycerol + CoA</text>
        <dbReference type="Rhea" id="RHEA:10868"/>
        <dbReference type="ChEBI" id="CHEBI:17815"/>
        <dbReference type="ChEBI" id="CHEBI:57287"/>
        <dbReference type="ChEBI" id="CHEBI:58342"/>
        <dbReference type="ChEBI" id="CHEBI:64615"/>
        <dbReference type="EC" id="2.3.1.20"/>
    </reaction>
</comment>
<comment type="pathway">
    <text>Glycerolipid metabolism; triacylglycerol biosynthesis.</text>
</comment>
<comment type="similarity">
    <text evidence="3">Belongs to the long-chain O-acyltransferase family.</text>
</comment>
<name>Y919_MYCBO</name>
<organism>
    <name type="scientific">Mycobacterium bovis (strain ATCC BAA-935 / AF2122/97)</name>
    <dbReference type="NCBI Taxonomy" id="233413"/>
    <lineage>
        <taxon>Bacteria</taxon>
        <taxon>Bacillati</taxon>
        <taxon>Actinomycetota</taxon>
        <taxon>Actinomycetes</taxon>
        <taxon>Mycobacteriales</taxon>
        <taxon>Mycobacteriaceae</taxon>
        <taxon>Mycobacterium</taxon>
        <taxon>Mycobacterium tuberculosis complex</taxon>
    </lineage>
</organism>
<sequence>MRQQQEADVVALGRKPGLLCVPERFRAMDLPMAAADALFLWAETPTRPLHVGALAVLSQPDNGTGRYLRKVFSAAVARQQVAPWWRRRPHRSLTSLGQWSWRTETEVDLDYHVRLSALPPRAGTAELWALVSELHAGMLDRSRPLWQVDLIEGLPGGRCAVYVKVHHALADGVSVMRLLQRIVTADPHQRQMPTLWEVPAQASVAKHTAPRGSSRPLTLAKGVLGQARGVPGMVRVVADTTWRAAQCRSGPLTLAAPHTPLNEPIAGARSVAGCSFPIERLRQVAEHADATINDVVLAMCGGALRAYLISRGALPGAPLIAMVPVSLRDTAVIDVFGQGPGNKIGTLMCSLATHLASPVERLSAIRASMRDGKAAIAGRSRNQALAMSALGAAPLALAMALGRVPAPLRPPNVTISNVPGPQGALYWNGARLDALYLLSAPVDGAALNITCSGTNEQITFGLTGCRRAVPALSILTDQLAHELELLVGVSEAGPGTRLRRIAGRR</sequence>
<feature type="chain" id="PRO_0000222907" description="Putative diacyglycerol O-acyltransferase Mb0919">
    <location>
        <begin position="1"/>
        <end position="505"/>
    </location>
</feature>
<feature type="active site" description="Proton acceptor" evidence="2">
    <location>
        <position position="167"/>
    </location>
</feature>
<protein>
    <recommendedName>
        <fullName>Putative diacyglycerol O-acyltransferase Mb0919</fullName>
        <ecNumber evidence="1">2.3.1.20</ecNumber>
    </recommendedName>
    <alternativeName>
        <fullName>Putative triacylglycerol synthase Mb0919</fullName>
    </alternativeName>
</protein>
<accession>P67205</accession>
<accession>A0A1R3XWR7</accession>
<accession>Q10554</accession>
<accession>X2BGC4</accession>
<reference key="1">
    <citation type="journal article" date="2003" name="Proc. Natl. Acad. Sci. U.S.A.">
        <title>The complete genome sequence of Mycobacterium bovis.</title>
        <authorList>
            <person name="Garnier T."/>
            <person name="Eiglmeier K."/>
            <person name="Camus J.-C."/>
            <person name="Medina N."/>
            <person name="Mansoor H."/>
            <person name="Pryor M."/>
            <person name="Duthoy S."/>
            <person name="Grondin S."/>
            <person name="Lacroix C."/>
            <person name="Monsempe C."/>
            <person name="Simon S."/>
            <person name="Harris B."/>
            <person name="Atkin R."/>
            <person name="Doggett J."/>
            <person name="Mayes R."/>
            <person name="Keating L."/>
            <person name="Wheeler P.R."/>
            <person name="Parkhill J."/>
            <person name="Barrell B.G."/>
            <person name="Cole S.T."/>
            <person name="Gordon S.V."/>
            <person name="Hewinson R.G."/>
        </authorList>
    </citation>
    <scope>NUCLEOTIDE SEQUENCE [LARGE SCALE GENOMIC DNA]</scope>
    <source>
        <strain>ATCC BAA-935 / AF2122/97</strain>
    </source>
</reference>
<reference key="2">
    <citation type="journal article" date="2017" name="Genome Announc.">
        <title>Updated reference genome sequence and annotation of Mycobacterium bovis AF2122/97.</title>
        <authorList>
            <person name="Malone K.M."/>
            <person name="Farrell D."/>
            <person name="Stuber T.P."/>
            <person name="Schubert O.T."/>
            <person name="Aebersold R."/>
            <person name="Robbe-Austerman S."/>
            <person name="Gordon S.V."/>
        </authorList>
    </citation>
    <scope>NUCLEOTIDE SEQUENCE [LARGE SCALE GENOMIC DNA]</scope>
    <scope>GENOME REANNOTATION</scope>
    <source>
        <strain>ATCC BAA-935 / AF2122/97</strain>
    </source>
</reference>
<gene>
    <name type="ordered locus">BQ2027_MB0919</name>
</gene>
<dbReference type="EC" id="2.3.1.20" evidence="1"/>
<dbReference type="EMBL" id="LT708304">
    <property type="protein sequence ID" value="SIT99517.1"/>
    <property type="molecule type" value="Genomic_DNA"/>
</dbReference>
<dbReference type="RefSeq" id="NP_854576.1">
    <property type="nucleotide sequence ID" value="NC_002945.3"/>
</dbReference>
<dbReference type="SMR" id="P67205"/>
<dbReference type="KEGG" id="mbo:BQ2027_MB0919"/>
<dbReference type="PATRIC" id="fig|233413.5.peg.1000"/>
<dbReference type="UniPathway" id="UPA00282"/>
<dbReference type="Proteomes" id="UP000001419">
    <property type="component" value="Chromosome"/>
</dbReference>
<dbReference type="GO" id="GO:0005886">
    <property type="term" value="C:plasma membrane"/>
    <property type="evidence" value="ECO:0007669"/>
    <property type="project" value="TreeGrafter"/>
</dbReference>
<dbReference type="GO" id="GO:0004144">
    <property type="term" value="F:diacylglycerol O-acyltransferase activity"/>
    <property type="evidence" value="ECO:0007669"/>
    <property type="project" value="UniProtKB-EC"/>
</dbReference>
<dbReference type="GO" id="GO:0051701">
    <property type="term" value="P:biological process involved in interaction with host"/>
    <property type="evidence" value="ECO:0007669"/>
    <property type="project" value="TreeGrafter"/>
</dbReference>
<dbReference type="GO" id="GO:0006071">
    <property type="term" value="P:glycerol metabolic process"/>
    <property type="evidence" value="ECO:0007669"/>
    <property type="project" value="UniProtKB-KW"/>
</dbReference>
<dbReference type="GO" id="GO:0001666">
    <property type="term" value="P:response to hypoxia"/>
    <property type="evidence" value="ECO:0007669"/>
    <property type="project" value="TreeGrafter"/>
</dbReference>
<dbReference type="GO" id="GO:0071731">
    <property type="term" value="P:response to nitric oxide"/>
    <property type="evidence" value="ECO:0007669"/>
    <property type="project" value="TreeGrafter"/>
</dbReference>
<dbReference type="GO" id="GO:0019432">
    <property type="term" value="P:triglyceride biosynthetic process"/>
    <property type="evidence" value="ECO:0007669"/>
    <property type="project" value="UniProtKB-UniPathway"/>
</dbReference>
<dbReference type="Gene3D" id="3.30.559.10">
    <property type="entry name" value="Chloramphenicol acetyltransferase-like domain"/>
    <property type="match status" value="1"/>
</dbReference>
<dbReference type="InterPro" id="IPR014292">
    <property type="entry name" value="Acyl_transf_WS/DGAT"/>
</dbReference>
<dbReference type="InterPro" id="IPR023213">
    <property type="entry name" value="CAT-like_dom_sf"/>
</dbReference>
<dbReference type="InterPro" id="IPR045034">
    <property type="entry name" value="O-acyltransferase_WSD1-like"/>
</dbReference>
<dbReference type="InterPro" id="IPR009721">
    <property type="entry name" value="O-acyltransferase_WSD1_C"/>
</dbReference>
<dbReference type="InterPro" id="IPR004255">
    <property type="entry name" value="O-acyltransferase_WSD1_N"/>
</dbReference>
<dbReference type="NCBIfam" id="TIGR02946">
    <property type="entry name" value="acyl_WS_DGAT"/>
    <property type="match status" value="1"/>
</dbReference>
<dbReference type="PANTHER" id="PTHR31650">
    <property type="entry name" value="O-ACYLTRANSFERASE (WSD1-LIKE) FAMILY PROTEIN"/>
    <property type="match status" value="1"/>
</dbReference>
<dbReference type="PANTHER" id="PTHR31650:SF1">
    <property type="entry name" value="WAX ESTER SYNTHASE_DIACYLGLYCEROL ACYLTRANSFERASE 4-RELATED"/>
    <property type="match status" value="1"/>
</dbReference>
<dbReference type="Pfam" id="PF06974">
    <property type="entry name" value="WS_DGAT_C"/>
    <property type="match status" value="1"/>
</dbReference>
<dbReference type="Pfam" id="PF03007">
    <property type="entry name" value="WS_DGAT_cat"/>
    <property type="match status" value="1"/>
</dbReference>
<dbReference type="SUPFAM" id="SSF52777">
    <property type="entry name" value="CoA-dependent acyltransferases"/>
    <property type="match status" value="2"/>
</dbReference>